<reference key="1">
    <citation type="journal article" date="2001" name="Nature">
        <title>Complete genome sequence of a multiple drug resistant Salmonella enterica serovar Typhi CT18.</title>
        <authorList>
            <person name="Parkhill J."/>
            <person name="Dougan G."/>
            <person name="James K.D."/>
            <person name="Thomson N.R."/>
            <person name="Pickard D."/>
            <person name="Wain J."/>
            <person name="Churcher C.M."/>
            <person name="Mungall K.L."/>
            <person name="Bentley S.D."/>
            <person name="Holden M.T.G."/>
            <person name="Sebaihia M."/>
            <person name="Baker S."/>
            <person name="Basham D."/>
            <person name="Brooks K."/>
            <person name="Chillingworth T."/>
            <person name="Connerton P."/>
            <person name="Cronin A."/>
            <person name="Davis P."/>
            <person name="Davies R.M."/>
            <person name="Dowd L."/>
            <person name="White N."/>
            <person name="Farrar J."/>
            <person name="Feltwell T."/>
            <person name="Hamlin N."/>
            <person name="Haque A."/>
            <person name="Hien T.T."/>
            <person name="Holroyd S."/>
            <person name="Jagels K."/>
            <person name="Krogh A."/>
            <person name="Larsen T.S."/>
            <person name="Leather S."/>
            <person name="Moule S."/>
            <person name="O'Gaora P."/>
            <person name="Parry C."/>
            <person name="Quail M.A."/>
            <person name="Rutherford K.M."/>
            <person name="Simmonds M."/>
            <person name="Skelton J."/>
            <person name="Stevens K."/>
            <person name="Whitehead S."/>
            <person name="Barrell B.G."/>
        </authorList>
    </citation>
    <scope>NUCLEOTIDE SEQUENCE [LARGE SCALE GENOMIC DNA]</scope>
    <source>
        <strain>CT18</strain>
    </source>
</reference>
<reference key="2">
    <citation type="journal article" date="2003" name="J. Bacteriol.">
        <title>Comparative genomics of Salmonella enterica serovar Typhi strains Ty2 and CT18.</title>
        <authorList>
            <person name="Deng W."/>
            <person name="Liou S.-R."/>
            <person name="Plunkett G. III"/>
            <person name="Mayhew G.F."/>
            <person name="Rose D.J."/>
            <person name="Burland V."/>
            <person name="Kodoyianni V."/>
            <person name="Schwartz D.C."/>
            <person name="Blattner F.R."/>
        </authorList>
    </citation>
    <scope>NUCLEOTIDE SEQUENCE [LARGE SCALE GENOMIC DNA]</scope>
    <source>
        <strain>ATCC 700931 / Ty2</strain>
    </source>
</reference>
<organism>
    <name type="scientific">Salmonella typhi</name>
    <dbReference type="NCBI Taxonomy" id="90370"/>
    <lineage>
        <taxon>Bacteria</taxon>
        <taxon>Pseudomonadati</taxon>
        <taxon>Pseudomonadota</taxon>
        <taxon>Gammaproteobacteria</taxon>
        <taxon>Enterobacterales</taxon>
        <taxon>Enterobacteriaceae</taxon>
        <taxon>Salmonella</taxon>
    </lineage>
</organism>
<evidence type="ECO:0000255" key="1">
    <source>
        <dbReference type="HAMAP-Rule" id="MF_00157"/>
    </source>
</evidence>
<feature type="chain" id="PRO_0000208973" description="Ribonuclease T">
    <location>
        <begin position="1"/>
        <end position="215"/>
    </location>
</feature>
<feature type="domain" description="Exonuclease" evidence="1">
    <location>
        <begin position="20"/>
        <end position="194"/>
    </location>
</feature>
<feature type="active site" description="Proton donor/acceptor" evidence="1">
    <location>
        <position position="181"/>
    </location>
</feature>
<feature type="binding site" evidence="1">
    <location>
        <position position="23"/>
    </location>
    <ligand>
        <name>Mg(2+)</name>
        <dbReference type="ChEBI" id="CHEBI:18420"/>
        <label>1</label>
        <note>catalytic</note>
    </ligand>
</feature>
<feature type="binding site" evidence="1">
    <location>
        <position position="23"/>
    </location>
    <ligand>
        <name>Mg(2+)</name>
        <dbReference type="ChEBI" id="CHEBI:18420"/>
        <label>2</label>
        <note>catalytic</note>
    </ligand>
</feature>
<feature type="binding site" evidence="1">
    <location>
        <position position="25"/>
    </location>
    <ligand>
        <name>Mg(2+)</name>
        <dbReference type="ChEBI" id="CHEBI:18420"/>
        <label>2</label>
        <note>catalytic</note>
    </ligand>
</feature>
<feature type="binding site" evidence="1">
    <location>
        <position position="181"/>
    </location>
    <ligand>
        <name>Mg(2+)</name>
        <dbReference type="ChEBI" id="CHEBI:18420"/>
        <label>2</label>
        <note>catalytic</note>
    </ligand>
</feature>
<feature type="binding site" evidence="1">
    <location>
        <position position="186"/>
    </location>
    <ligand>
        <name>Mg(2+)</name>
        <dbReference type="ChEBI" id="CHEBI:18420"/>
        <label>2</label>
        <note>catalytic</note>
    </ligand>
</feature>
<feature type="site" description="Important for substrate binding and specificity" evidence="1">
    <location>
        <position position="29"/>
    </location>
</feature>
<feature type="site" description="Important for substrate binding and specificity" evidence="1">
    <location>
        <position position="77"/>
    </location>
</feature>
<feature type="site" description="Important for substrate binding and specificity" evidence="1">
    <location>
        <position position="124"/>
    </location>
</feature>
<feature type="site" description="Important for substrate binding and specificity" evidence="1">
    <location>
        <position position="146"/>
    </location>
</feature>
<comment type="function">
    <text evidence="1">Trims short 3' overhangs of a variety of RNA species, leaving a one or two nucleotide 3' overhang. Responsible for the end-turnover of tRNA: specifically removes the terminal AMP residue from uncharged tRNA (tRNA-C-C-A). Also appears to be involved in tRNA biosynthesis.</text>
</comment>
<comment type="cofactor">
    <cofactor evidence="1">
        <name>Mg(2+)</name>
        <dbReference type="ChEBI" id="CHEBI:18420"/>
    </cofactor>
    <text evidence="1">Binds two Mg(2+) per subunit. The active form of the enzyme binds two Mg(2+) ions in its active site. The first Mg(2+) forms only one salt bridge with the protein.</text>
</comment>
<comment type="subunit">
    <text evidence="1">Homodimer.</text>
</comment>
<comment type="similarity">
    <text evidence="1">Belongs to the RNase T family.</text>
</comment>
<gene>
    <name evidence="1" type="primary">rnt</name>
    <name type="ordered locus">STY1688</name>
    <name type="ordered locus">t1302</name>
</gene>
<dbReference type="EC" id="3.1.13.-" evidence="1"/>
<dbReference type="EMBL" id="AL513382">
    <property type="protein sequence ID" value="CAD01933.1"/>
    <property type="molecule type" value="Genomic_DNA"/>
</dbReference>
<dbReference type="EMBL" id="AE014613">
    <property type="protein sequence ID" value="AAO68952.1"/>
    <property type="molecule type" value="Genomic_DNA"/>
</dbReference>
<dbReference type="RefSeq" id="NP_456096.1">
    <property type="nucleotide sequence ID" value="NC_003198.1"/>
</dbReference>
<dbReference type="RefSeq" id="WP_001282267.1">
    <property type="nucleotide sequence ID" value="NZ_WSUR01000011.1"/>
</dbReference>
<dbReference type="SMR" id="P66685"/>
<dbReference type="STRING" id="220341.gene:17585623"/>
<dbReference type="KEGG" id="stt:t1302"/>
<dbReference type="KEGG" id="sty:STY1688"/>
<dbReference type="PATRIC" id="fig|220341.7.peg.1698"/>
<dbReference type="eggNOG" id="COG0847">
    <property type="taxonomic scope" value="Bacteria"/>
</dbReference>
<dbReference type="HOGENOM" id="CLU_082724_0_0_6"/>
<dbReference type="OMA" id="CYMVNHL"/>
<dbReference type="OrthoDB" id="9778264at2"/>
<dbReference type="Proteomes" id="UP000000541">
    <property type="component" value="Chromosome"/>
</dbReference>
<dbReference type="Proteomes" id="UP000002670">
    <property type="component" value="Chromosome"/>
</dbReference>
<dbReference type="GO" id="GO:0005829">
    <property type="term" value="C:cytosol"/>
    <property type="evidence" value="ECO:0007669"/>
    <property type="project" value="TreeGrafter"/>
</dbReference>
<dbReference type="GO" id="GO:0008408">
    <property type="term" value="F:3'-5' exonuclease activity"/>
    <property type="evidence" value="ECO:0007669"/>
    <property type="project" value="TreeGrafter"/>
</dbReference>
<dbReference type="GO" id="GO:0000287">
    <property type="term" value="F:magnesium ion binding"/>
    <property type="evidence" value="ECO:0007669"/>
    <property type="project" value="UniProtKB-UniRule"/>
</dbReference>
<dbReference type="GO" id="GO:0003676">
    <property type="term" value="F:nucleic acid binding"/>
    <property type="evidence" value="ECO:0007669"/>
    <property type="project" value="InterPro"/>
</dbReference>
<dbReference type="GO" id="GO:0016896">
    <property type="term" value="F:RNA exonuclease activity, producing 5'-phosphomonoesters"/>
    <property type="evidence" value="ECO:0007669"/>
    <property type="project" value="UniProtKB-UniRule"/>
</dbReference>
<dbReference type="GO" id="GO:0045004">
    <property type="term" value="P:DNA replication proofreading"/>
    <property type="evidence" value="ECO:0007669"/>
    <property type="project" value="TreeGrafter"/>
</dbReference>
<dbReference type="GO" id="GO:0008033">
    <property type="term" value="P:tRNA processing"/>
    <property type="evidence" value="ECO:0007669"/>
    <property type="project" value="UniProtKB-KW"/>
</dbReference>
<dbReference type="CDD" id="cd06134">
    <property type="entry name" value="RNaseT"/>
    <property type="match status" value="1"/>
</dbReference>
<dbReference type="FunFam" id="3.30.420.10:FF:000009">
    <property type="entry name" value="Ribonuclease T"/>
    <property type="match status" value="1"/>
</dbReference>
<dbReference type="Gene3D" id="3.30.420.10">
    <property type="entry name" value="Ribonuclease H-like superfamily/Ribonuclease H"/>
    <property type="match status" value="1"/>
</dbReference>
<dbReference type="HAMAP" id="MF_00157">
    <property type="entry name" value="RNase_T"/>
    <property type="match status" value="1"/>
</dbReference>
<dbReference type="InterPro" id="IPR013520">
    <property type="entry name" value="Exonuclease_RNaseT/DNA_pol3"/>
</dbReference>
<dbReference type="InterPro" id="IPR005987">
    <property type="entry name" value="RNase_T"/>
</dbReference>
<dbReference type="InterPro" id="IPR012337">
    <property type="entry name" value="RNaseH-like_sf"/>
</dbReference>
<dbReference type="InterPro" id="IPR036397">
    <property type="entry name" value="RNaseH_sf"/>
</dbReference>
<dbReference type="NCBIfam" id="TIGR01298">
    <property type="entry name" value="RNaseT"/>
    <property type="match status" value="1"/>
</dbReference>
<dbReference type="PANTHER" id="PTHR30231">
    <property type="entry name" value="DNA POLYMERASE III SUBUNIT EPSILON"/>
    <property type="match status" value="1"/>
</dbReference>
<dbReference type="PANTHER" id="PTHR30231:SF2">
    <property type="entry name" value="RIBONUCLEASE T"/>
    <property type="match status" value="1"/>
</dbReference>
<dbReference type="Pfam" id="PF00929">
    <property type="entry name" value="RNase_T"/>
    <property type="match status" value="1"/>
</dbReference>
<dbReference type="SMART" id="SM00479">
    <property type="entry name" value="EXOIII"/>
    <property type="match status" value="1"/>
</dbReference>
<dbReference type="SUPFAM" id="SSF53098">
    <property type="entry name" value="Ribonuclease H-like"/>
    <property type="match status" value="1"/>
</dbReference>
<proteinExistence type="inferred from homology"/>
<sequence length="215" mass="23535">MSDNAQLSGLCDRFRGFYPVVIDVETAGFNAKTDALLEIAAITLKMDEQGWLMPDMTLHFHVEPFAGANLQPEALAFNGIDPSNPLRGAVSEYEALHAIFKMVRKGIKDSGCSRAIMVAHNATFDHSFMMAAAERASLKRNPFHPFVTFDTAALSGLALGQTVLSKACLAAGMEFDGEKAHSALYDTERTAVLFCEIVNRWKRLGGWPLPLPTDK</sequence>
<name>RNT_SALTI</name>
<accession>P66685</accession>
<accession>Q8XFQ9</accession>
<protein>
    <recommendedName>
        <fullName evidence="1">Ribonuclease T</fullName>
        <ecNumber evidence="1">3.1.13.-</ecNumber>
    </recommendedName>
    <alternativeName>
        <fullName evidence="1">Exoribonuclease T</fullName>
        <shortName evidence="1">RNase T</shortName>
    </alternativeName>
</protein>
<keyword id="KW-0269">Exonuclease</keyword>
<keyword id="KW-0378">Hydrolase</keyword>
<keyword id="KW-0460">Magnesium</keyword>
<keyword id="KW-0479">Metal-binding</keyword>
<keyword id="KW-0540">Nuclease</keyword>
<keyword id="KW-0819">tRNA processing</keyword>